<accession>Q5UPQ9</accession>
<protein>
    <recommendedName>
        <fullName>Putative ankyrin repeat protein L769</fullName>
    </recommendedName>
</protein>
<sequence length="628" mass="74574">MESKTYYLDKISNNLGYPVYFLFDEIHVIENTNNNIKEIIQVEPDYSKPDLKFTEYRNGFFATNYIIEVAKVPLLDVTTIEKLLQYCSSFKLYKRFFENNRLDLCDYLITKDIKLTRRSDKFILNRIKKLDKDSLMYIINHNDFFQIRWEVIFKFVVSNITNISSDTNNEIIDYLMTLINNFDYKIDYDEIIKHIMIDPRTLKIKNIELFAELVDINYMDILKQACFFGSTEIINYVLNKGIEYDFYELIKSDISITALKFFIDKGHYIDDTTINILVNPESKNINRLIRSLINQKILTQDLITKQLLETIIKTDIHSIEYLINDFDIINMVDLDEIMIEALRYNFTELIDWCINNGSDINRHMSFIMKECCPEIVSKFIELGAQVPNDVSCYNPELIEIYCMYDDCIPYLKTIIEKEFDTAENIIHNIIENRPHIQVLKYLLSEITNHDLTIPKLANMFIHDYCYCSSENYGDLISLNIQFNIEQQIIIQIIEGNFINAKELIFTNYDCYNNLKILFVTMMSNNIDMLEFLLEINNYDQDYLQWVLIFSSRNVTMLEYIINNTNIDPNLFKQEMSTFSSHFKSYSVDYLKLNDYYEGTSILINSRLDIFMKNIGINIFKSYDNQRRL</sequence>
<dbReference type="EMBL" id="AY653733">
    <property type="protein sequence ID" value="AAV51029.1"/>
    <property type="molecule type" value="Genomic_DNA"/>
</dbReference>
<dbReference type="SMR" id="Q5UPQ9"/>
<dbReference type="KEGG" id="vg:9925427"/>
<dbReference type="Proteomes" id="UP000001134">
    <property type="component" value="Genome"/>
</dbReference>
<dbReference type="InterPro" id="IPR002110">
    <property type="entry name" value="Ankyrin_rpt"/>
</dbReference>
<dbReference type="InterPro" id="IPR036770">
    <property type="entry name" value="Ankyrin_rpt-contain_sf"/>
</dbReference>
<dbReference type="SMART" id="SM00248">
    <property type="entry name" value="ANK"/>
    <property type="match status" value="4"/>
</dbReference>
<dbReference type="SUPFAM" id="SSF48403">
    <property type="entry name" value="Ankyrin repeat"/>
    <property type="match status" value="1"/>
</dbReference>
<feature type="chain" id="PRO_0000067196" description="Putative ankyrin repeat protein L769">
    <location>
        <begin position="1"/>
        <end position="628"/>
    </location>
</feature>
<feature type="repeat" description="ANK 1">
    <location>
        <begin position="217"/>
        <end position="246"/>
    </location>
</feature>
<feature type="repeat" description="ANK 2">
    <location>
        <begin position="333"/>
        <end position="362"/>
    </location>
</feature>
<feature type="repeat" description="ANK 3">
    <location>
        <begin position="421"/>
        <end position="451"/>
    </location>
</feature>
<feature type="repeat" description="ANK 4">
    <location>
        <begin position="512"/>
        <end position="542"/>
    </location>
</feature>
<name>YL769_MIMIV</name>
<gene>
    <name type="ordered locus">MIMI_L769</name>
</gene>
<organism>
    <name type="scientific">Acanthamoeba polyphaga mimivirus</name>
    <name type="common">APMV</name>
    <dbReference type="NCBI Taxonomy" id="212035"/>
    <lineage>
        <taxon>Viruses</taxon>
        <taxon>Varidnaviria</taxon>
        <taxon>Bamfordvirae</taxon>
        <taxon>Nucleocytoviricota</taxon>
        <taxon>Megaviricetes</taxon>
        <taxon>Imitervirales</taxon>
        <taxon>Mimiviridae</taxon>
        <taxon>Megamimivirinae</taxon>
        <taxon>Mimivirus</taxon>
        <taxon>Mimivirus bradfordmassiliense</taxon>
    </lineage>
</organism>
<organismHost>
    <name type="scientific">Acanthamoeba polyphaga</name>
    <name type="common">Amoeba</name>
    <dbReference type="NCBI Taxonomy" id="5757"/>
</organismHost>
<proteinExistence type="predicted"/>
<keyword id="KW-0040">ANK repeat</keyword>
<keyword id="KW-1185">Reference proteome</keyword>
<keyword id="KW-0677">Repeat</keyword>
<reference key="1">
    <citation type="journal article" date="2004" name="Science">
        <title>The 1.2-megabase genome sequence of Mimivirus.</title>
        <authorList>
            <person name="Raoult D."/>
            <person name="Audic S."/>
            <person name="Robert C."/>
            <person name="Abergel C."/>
            <person name="Renesto P."/>
            <person name="Ogata H."/>
            <person name="La Scola B."/>
            <person name="Susan M."/>
            <person name="Claverie J.-M."/>
        </authorList>
    </citation>
    <scope>NUCLEOTIDE SEQUENCE [LARGE SCALE GENOMIC DNA]</scope>
    <source>
        <strain>Rowbotham-Bradford</strain>
    </source>
</reference>